<keyword id="KW-0064">Aspartyl protease</keyword>
<keyword id="KW-0167">Capsid protein</keyword>
<keyword id="KW-1262">Eukaryotic host gene expression shutoff by virus</keyword>
<keyword id="KW-1193">Eukaryotic host translation shutoff by virus</keyword>
<keyword id="KW-1190">Host gene expression shutoff by virus</keyword>
<keyword id="KW-0945">Host-virus interaction</keyword>
<keyword id="KW-0378">Hydrolase</keyword>
<keyword id="KW-0449">Lipoprotein</keyword>
<keyword id="KW-0479">Metal-binding</keyword>
<keyword id="KW-0519">Myristate</keyword>
<keyword id="KW-0645">Protease</keyword>
<keyword id="KW-0677">Repeat</keyword>
<keyword id="KW-0688">Ribosomal frameshifting</keyword>
<keyword id="KW-0543">Viral nucleoprotein</keyword>
<keyword id="KW-0946">Virion</keyword>
<keyword id="KW-0862">Zinc</keyword>
<keyword id="KW-0863">Zinc-finger</keyword>
<comment type="function">
    <text evidence="1">Matrix protein p19 targets Gag, Gag-Pro and Gag-Pro-Pol polyproteins to the plasma membrane via a multipartite membrane binding signal, that includes its myristoylated N-terminus. Also mediates nuclear localization of the preintegration complex (By similarity).</text>
</comment>
<comment type="function">
    <text evidence="1">Capsid protein p24 forms the conical core of the virus that encapsulates the genomic RNA-nucleocapsid complex.</text>
</comment>
<comment type="function">
    <text evidence="1">Nucleocapsid protein p15 is involved in the packaging and encapsidation of two copies of the genome.</text>
</comment>
<comment type="function">
    <text evidence="1">The aspartyl protease mediates proteolytic cleavages of Gag, Gag-Pro and Gag-Pro-Pol polyproteins during or shortly after the release of the virion from the plasma membrane. Cleavages take place as an ordered, step-wise cascade to yield mature proteins. This process is called maturation. Displays maximal activity during the budding process just prior to particle release from the cell. Hydrolyzes host EIF4GI in order to shut off the capped cellular mRNA translation. The resulting inhibition of cellular protein synthesis serves to ensure maximal viral gene expression and to evade host immune response (By similarity).</text>
</comment>
<comment type="subunit">
    <text evidence="1">Interacts with human TSG101. This interaction is essential for budding and release of viral particles (By similarity).</text>
</comment>
<comment type="subcellular location">
    <molecule>Matrix protein p19</molecule>
    <subcellularLocation>
        <location evidence="6">Virion</location>
    </subcellularLocation>
</comment>
<comment type="subcellular location">
    <molecule>Capsid protein p24</molecule>
    <subcellularLocation>
        <location evidence="6">Virion</location>
    </subcellularLocation>
</comment>
<comment type="subcellular location">
    <molecule>Nucleocapsid protein p15-pro</molecule>
    <subcellularLocation>
        <location evidence="6">Virion</location>
    </subcellularLocation>
</comment>
<comment type="alternative products">
    <event type="ribosomal frameshifting"/>
    <isoform>
        <id>Q09SZ9-1</id>
        <name>Gag-Pro polyprotein</name>
        <sequence type="displayed"/>
    </isoform>
    <isoform>
        <id>Q09T00-1</id>
        <name>Gag polyprotein</name>
        <sequence type="external"/>
    </isoform>
    <isoform>
        <id>Q4U0X6-1</id>
        <name>Gag-Pol polyprotein</name>
        <sequence type="external"/>
    </isoform>
    <text>This strategy of translation probably allows the virus to modulate the quantity of each viral protein.</text>
</comment>
<comment type="domain">
    <text evidence="1">Late-budding domains (L domains) are short sequence motifs essential for viral particle release. They can occur individually or in close proximity within structural proteins. They interacts with sorting cellular proteins of the multivesicular body (MVB) pathway. Most of these proteins are class E vacuolar protein sorting factors belonging to ESCRT-I, ESCRT-II or ESCRT-III complexes. Matrix protein p19 contains two L domains: a PTAP/PSAP motif which interacts with the UEV domain of TSG101, and a PPXY motif which binds to the WW domains of HECT (homologous to E6-AP C-terminus) E3 ubiquitin ligases (By similarity).</text>
</comment>
<comment type="domain">
    <text evidence="1">The capsid protein N-terminus seems to be involved in Gag-Gag interactions.</text>
</comment>
<comment type="PTM">
    <text evidence="1">Specific enzymatic cleavages by the viral protease yield mature proteins. The polyprotein is cleaved during and after budding, this process is termed maturation. The protease is autoproteolytically processed at its N- and C-termini (By similarity).</text>
</comment>
<comment type="miscellaneous">
    <molecule>Isoform Gag-Pro polyprotein</molecule>
    <text>Produced by -1 ribosomal frameshifting at the gag-pro genes boundary.</text>
</comment>
<protein>
    <recommendedName>
        <fullName>Gag-Pro polyprotein</fullName>
    </recommendedName>
    <alternativeName>
        <fullName>Pr76Gag-Pro</fullName>
    </alternativeName>
    <component>
        <recommendedName>
            <fullName>Matrix protein p19</fullName>
            <shortName>MA</shortName>
        </recommendedName>
    </component>
    <component>
        <recommendedName>
            <fullName>Capsid protein p24</fullName>
            <shortName>CA</shortName>
        </recommendedName>
    </component>
    <component>
        <recommendedName>
            <fullName>Nucleocapsid protein p15-pro</fullName>
            <shortName>NC'</shortName>
            <shortName>NC-pro</shortName>
        </recommendedName>
    </component>
    <component>
        <recommendedName>
            <fullName>Protease</fullName>
            <shortName>PR</shortName>
            <ecNumber>3.4.23.-</ecNumber>
        </recommendedName>
    </component>
    <component>
        <recommendedName>
            <fullName>p1</fullName>
        </recommendedName>
    </component>
    <component>
        <recommendedName>
            <fullName>Transframe peptide</fullName>
            <shortName>TFP</shortName>
        </recommendedName>
        <alternativeName>
            <fullName>p8</fullName>
        </alternativeName>
        <alternativeName>
            <fullName>pX</fullName>
        </alternativeName>
    </component>
</protein>
<evidence type="ECO:0000250" key="1"/>
<evidence type="ECO:0000255" key="2">
    <source>
        <dbReference type="PROSITE-ProRule" id="PRU00047"/>
    </source>
</evidence>
<evidence type="ECO:0000255" key="3">
    <source>
        <dbReference type="PROSITE-ProRule" id="PRU00275"/>
    </source>
</evidence>
<evidence type="ECO:0000255" key="4">
    <source>
        <dbReference type="PROSITE-ProRule" id="PRU10094"/>
    </source>
</evidence>
<evidence type="ECO:0000256" key="5">
    <source>
        <dbReference type="SAM" id="MobiDB-lite"/>
    </source>
</evidence>
<evidence type="ECO:0000305" key="6"/>
<accession>Q09SZ9</accession>
<feature type="initiator methionine" description="Removed; by host" evidence="1">
    <location>
        <position position="1"/>
    </location>
</feature>
<feature type="chain" id="PRO_0000260480" description="Gag-Pro polyprotein" evidence="1">
    <location>
        <begin position="2"/>
        <end position="584"/>
    </location>
</feature>
<feature type="chain" id="PRO_0000260481" description="Matrix protein p19" evidence="1">
    <location>
        <begin position="2"/>
        <end position="123"/>
    </location>
</feature>
<feature type="chain" id="PRO_0000260482" description="Capsid protein p24" evidence="1">
    <location>
        <begin position="124"/>
        <end position="337"/>
    </location>
</feature>
<feature type="chain" id="PRO_0000260483" description="Nucleocapsid protein p15-pro" evidence="1">
    <location>
        <begin position="338"/>
        <end position="430"/>
    </location>
</feature>
<feature type="chain" id="PRO_0000260484" description="Protease" evidence="1">
    <location>
        <begin position="431"/>
        <end position="553"/>
    </location>
</feature>
<feature type="peptide" id="PRO_0000260485" description="p1" evidence="1">
    <location>
        <begin position="554"/>
        <end position="561"/>
    </location>
</feature>
<feature type="chain" id="PRO_0000260486" description="Transframe peptide" evidence="1">
    <location>
        <begin position="562"/>
        <end position="584"/>
    </location>
</feature>
<feature type="domain" description="Peptidase A2" evidence="3">
    <location>
        <begin position="457"/>
        <end position="535"/>
    </location>
</feature>
<feature type="zinc finger region" description="CCHC-type 1" evidence="2">
    <location>
        <begin position="349"/>
        <end position="366"/>
    </location>
</feature>
<feature type="zinc finger region" description="CCHC-type 2" evidence="2">
    <location>
        <begin position="372"/>
        <end position="389"/>
    </location>
</feature>
<feature type="region of interest" description="Disordered" evidence="5">
    <location>
        <begin position="93"/>
        <end position="117"/>
    </location>
</feature>
<feature type="region of interest" description="Disordered" evidence="5">
    <location>
        <begin position="564"/>
        <end position="584"/>
    </location>
</feature>
<feature type="short sequence motif" description="PTAP/PSAP motif">
    <location>
        <begin position="98"/>
        <end position="101"/>
    </location>
</feature>
<feature type="short sequence motif" description="PPXY motif">
    <location>
        <begin position="109"/>
        <end position="112"/>
    </location>
</feature>
<feature type="compositionally biased region" description="Pro residues" evidence="5">
    <location>
        <begin position="98"/>
        <end position="113"/>
    </location>
</feature>
<feature type="compositionally biased region" description="Polar residues" evidence="5">
    <location>
        <begin position="575"/>
        <end position="584"/>
    </location>
</feature>
<feature type="active site" description="For protease activity; shared with dimeric partner" evidence="4">
    <location>
        <position position="462"/>
    </location>
</feature>
<feature type="site" description="Cleavage; by viral protease" evidence="1">
    <location>
        <begin position="123"/>
        <end position="124"/>
    </location>
</feature>
<feature type="site" description="Cleavage; by viral protease" evidence="1">
    <location>
        <begin position="337"/>
        <end position="338"/>
    </location>
</feature>
<feature type="site" description="Cleavage; by viral protease" evidence="1">
    <location>
        <begin position="430"/>
        <end position="431"/>
    </location>
</feature>
<feature type="site" description="Cleavage; by viral protease" evidence="1">
    <location>
        <begin position="553"/>
        <end position="554"/>
    </location>
</feature>
<feature type="site" description="Cleavage; by viral protease" evidence="1">
    <location>
        <begin position="561"/>
        <end position="562"/>
    </location>
</feature>
<feature type="lipid moiety-binding region" description="N-myristoyl glycine; by host" evidence="1">
    <location>
        <position position="2"/>
    </location>
</feature>
<name>PRO_HTL3P</name>
<organism>
    <name type="scientific">Human T-cell leukemia virus 3 (strain Pyl43)</name>
    <name type="common">HTLV-3</name>
    <dbReference type="NCBI Taxonomy" id="406769"/>
    <lineage>
        <taxon>Viruses</taxon>
        <taxon>Riboviria</taxon>
        <taxon>Pararnavirae</taxon>
        <taxon>Artverviricota</taxon>
        <taxon>Revtraviricetes</taxon>
        <taxon>Ortervirales</taxon>
        <taxon>Retroviridae</taxon>
        <taxon>Orthoretrovirinae</taxon>
        <taxon>Deltaretrovirus</taxon>
        <taxon>Primate T-lymphotropic virus 3</taxon>
    </lineage>
</organism>
<dbReference type="EC" id="3.4.23.-"/>
<dbReference type="EMBL" id="DQ462191">
    <property type="protein sequence ID" value="ABF18960.1"/>
    <property type="status" value="ALT_SEQ"/>
    <property type="molecule type" value="Genomic_DNA"/>
</dbReference>
<dbReference type="SMR" id="Q09SZ9"/>
<dbReference type="Proteomes" id="UP000007684">
    <property type="component" value="Genome"/>
</dbReference>
<dbReference type="GO" id="GO:0019013">
    <property type="term" value="C:viral nucleocapsid"/>
    <property type="evidence" value="ECO:0007669"/>
    <property type="project" value="UniProtKB-KW"/>
</dbReference>
<dbReference type="GO" id="GO:0004190">
    <property type="term" value="F:aspartic-type endopeptidase activity"/>
    <property type="evidence" value="ECO:0007669"/>
    <property type="project" value="UniProtKB-KW"/>
</dbReference>
<dbReference type="GO" id="GO:0003676">
    <property type="term" value="F:nucleic acid binding"/>
    <property type="evidence" value="ECO:0007669"/>
    <property type="project" value="InterPro"/>
</dbReference>
<dbReference type="GO" id="GO:0005198">
    <property type="term" value="F:structural molecule activity"/>
    <property type="evidence" value="ECO:0007669"/>
    <property type="project" value="InterPro"/>
</dbReference>
<dbReference type="GO" id="GO:0008270">
    <property type="term" value="F:zinc ion binding"/>
    <property type="evidence" value="ECO:0007669"/>
    <property type="project" value="UniProtKB-KW"/>
</dbReference>
<dbReference type="GO" id="GO:0006508">
    <property type="term" value="P:proteolysis"/>
    <property type="evidence" value="ECO:0007669"/>
    <property type="project" value="UniProtKB-KW"/>
</dbReference>
<dbReference type="GO" id="GO:0039657">
    <property type="term" value="P:symbiont-mediated suppression of host gene expression"/>
    <property type="evidence" value="ECO:0007669"/>
    <property type="project" value="UniProtKB-KW"/>
</dbReference>
<dbReference type="GO" id="GO:0075523">
    <property type="term" value="P:viral translational frameshifting"/>
    <property type="evidence" value="ECO:0007669"/>
    <property type="project" value="UniProtKB-KW"/>
</dbReference>
<dbReference type="Gene3D" id="1.10.1200.30">
    <property type="match status" value="1"/>
</dbReference>
<dbReference type="Gene3D" id="2.40.70.10">
    <property type="entry name" value="Acid Proteases"/>
    <property type="match status" value="1"/>
</dbReference>
<dbReference type="Gene3D" id="1.10.185.10">
    <property type="entry name" value="Delta-retroviral matrix"/>
    <property type="match status" value="1"/>
</dbReference>
<dbReference type="Gene3D" id="1.10.375.10">
    <property type="entry name" value="Human Immunodeficiency Virus Type 1 Capsid Protein"/>
    <property type="match status" value="1"/>
</dbReference>
<dbReference type="Gene3D" id="4.10.60.10">
    <property type="entry name" value="Zinc finger, CCHC-type"/>
    <property type="match status" value="1"/>
</dbReference>
<dbReference type="InterPro" id="IPR001969">
    <property type="entry name" value="Aspartic_peptidase_AS"/>
</dbReference>
<dbReference type="InterPro" id="IPR003139">
    <property type="entry name" value="D_retro_matrix"/>
</dbReference>
<dbReference type="InterPro" id="IPR045345">
    <property type="entry name" value="Gag_p24_C"/>
</dbReference>
<dbReference type="InterPro" id="IPR001995">
    <property type="entry name" value="Peptidase_A2_cat"/>
</dbReference>
<dbReference type="InterPro" id="IPR021109">
    <property type="entry name" value="Peptidase_aspartic_dom_sf"/>
</dbReference>
<dbReference type="InterPro" id="IPR050195">
    <property type="entry name" value="Primate_lentivir_Gag_pol-like"/>
</dbReference>
<dbReference type="InterPro" id="IPR018061">
    <property type="entry name" value="Retropepsins"/>
</dbReference>
<dbReference type="InterPro" id="IPR008916">
    <property type="entry name" value="Retrov_capsid_C"/>
</dbReference>
<dbReference type="InterPro" id="IPR008919">
    <property type="entry name" value="Retrov_capsid_N"/>
</dbReference>
<dbReference type="InterPro" id="IPR010999">
    <property type="entry name" value="Retrovr_matrix"/>
</dbReference>
<dbReference type="InterPro" id="IPR001878">
    <property type="entry name" value="Znf_CCHC"/>
</dbReference>
<dbReference type="InterPro" id="IPR036875">
    <property type="entry name" value="Znf_CCHC_sf"/>
</dbReference>
<dbReference type="PANTHER" id="PTHR40389">
    <property type="entry name" value="ENDOGENOUS RETROVIRUS GROUP K MEMBER 24 GAG POLYPROTEIN-RELATED"/>
    <property type="match status" value="1"/>
</dbReference>
<dbReference type="PANTHER" id="PTHR40389:SF3">
    <property type="entry name" value="IGE-BINDING PROTEIN"/>
    <property type="match status" value="1"/>
</dbReference>
<dbReference type="Pfam" id="PF02228">
    <property type="entry name" value="Gag_p19"/>
    <property type="match status" value="1"/>
</dbReference>
<dbReference type="Pfam" id="PF00607">
    <property type="entry name" value="Gag_p24"/>
    <property type="match status" value="1"/>
</dbReference>
<dbReference type="Pfam" id="PF19317">
    <property type="entry name" value="Gag_p24_C"/>
    <property type="match status" value="1"/>
</dbReference>
<dbReference type="Pfam" id="PF00077">
    <property type="entry name" value="RVP"/>
    <property type="match status" value="1"/>
</dbReference>
<dbReference type="Pfam" id="PF00098">
    <property type="entry name" value="zf-CCHC"/>
    <property type="match status" value="1"/>
</dbReference>
<dbReference type="SMART" id="SM00343">
    <property type="entry name" value="ZnF_C2HC"/>
    <property type="match status" value="2"/>
</dbReference>
<dbReference type="SUPFAM" id="SSF50630">
    <property type="entry name" value="Acid proteases"/>
    <property type="match status" value="1"/>
</dbReference>
<dbReference type="SUPFAM" id="SSF47836">
    <property type="entry name" value="Retroviral matrix proteins"/>
    <property type="match status" value="1"/>
</dbReference>
<dbReference type="SUPFAM" id="SSF47353">
    <property type="entry name" value="Retrovirus capsid dimerization domain-like"/>
    <property type="match status" value="1"/>
</dbReference>
<dbReference type="SUPFAM" id="SSF47943">
    <property type="entry name" value="Retrovirus capsid protein, N-terminal core domain"/>
    <property type="match status" value="1"/>
</dbReference>
<dbReference type="SUPFAM" id="SSF57756">
    <property type="entry name" value="Retrovirus zinc finger-like domains"/>
    <property type="match status" value="1"/>
</dbReference>
<dbReference type="PROSITE" id="PS50175">
    <property type="entry name" value="ASP_PROT_RETROV"/>
    <property type="match status" value="1"/>
</dbReference>
<dbReference type="PROSITE" id="PS00141">
    <property type="entry name" value="ASP_PROTEASE"/>
    <property type="match status" value="1"/>
</dbReference>
<dbReference type="PROSITE" id="PS50158">
    <property type="entry name" value="ZF_CCHC"/>
    <property type="match status" value="1"/>
</dbReference>
<gene>
    <name type="primary">gag-pro</name>
</gene>
<organismHost>
    <name type="scientific">Homo sapiens</name>
    <name type="common">Human</name>
    <dbReference type="NCBI Taxonomy" id="9606"/>
</organismHost>
<proteinExistence type="inferred from homology"/>
<reference key="1">
    <citation type="journal article" date="2006" name="J. Virol.">
        <title>Human T-cell lymphotropic virus type 3: complete nucleotide sequence and characterization of the human tax3 protein.</title>
        <authorList>
            <person name="Calattini S."/>
            <person name="Chevalier S.A."/>
            <person name="Duprez R."/>
            <person name="Afonso P."/>
            <person name="Froment A."/>
            <person name="Gessain A."/>
            <person name="Mahieux R."/>
        </authorList>
    </citation>
    <scope>NUCLEOTIDE SEQUENCE [GENOMIC DNA]</scope>
</reference>
<sequence length="584" mass="64519">MGKTYSSPVNPIPKAPKGLAIHHWLNFLQAAYRLQPGPSEFDFHQLRKFLKLAIKTPVWLNPINYSVLARLIPKNYPGRVHEIVAILIQETPAREAPPSAPPADDPQKPPPYPEHAQVEPQCLPVLHPHGAPATHRPWQMKDLQAIKQEVSSSAPGSPQFMQTVRLAVQQFDPTAKDLHDLLQYLCSSLVASLHHQQLETLIAQAETQGITGYNPLAGPLRVQANNPNQQGLRREYQNLWLSAFSALPGNTKDPTWAAILQGPEEPFCSFVERLNVALDNGLPEGTPKDPILRSLAYSNANKECQKLLQARGQTNSPLGEMLRACQTWTPRDKNKILMIQPKKTPPPNQPCFRCGQAGHWSRDCKQPRPPPGPCPLCQDPAHWKQDCPQLKADTKGSEDLLLDLPCEASHVRERKNLLRGGGLTSPRTILPLIPLSQQRQPILHVQVSFSNTSPVGVQALLDTGADITVLPAYLCPPDSNLQDTTVLGAGGPSTSKFKILPRPVHIHLPFRKQPVTLTSCLIDTNDQWTILGRDALQQCQSSLYLADQPSSVLPVQTPKLIGLEHLPPPPEVSQFPLNRSASRP</sequence>